<feature type="chain" id="PRO_0000277378" description="Ycf92-like protein">
    <location>
        <begin position="1"/>
        <end position="308"/>
    </location>
</feature>
<feature type="transmembrane region" description="Helical" evidence="1">
    <location>
        <begin position="41"/>
        <end position="61"/>
    </location>
</feature>
<feature type="transmembrane region" description="Helical" evidence="1">
    <location>
        <begin position="75"/>
        <end position="95"/>
    </location>
</feature>
<feature type="transmembrane region" description="Helical" evidence="1">
    <location>
        <begin position="153"/>
        <end position="173"/>
    </location>
</feature>
<feature type="transmembrane region" description="Helical" evidence="1">
    <location>
        <begin position="192"/>
        <end position="212"/>
    </location>
</feature>
<feature type="transmembrane region" description="Helical" evidence="1">
    <location>
        <begin position="288"/>
        <end position="308"/>
    </location>
</feature>
<reference key="1">
    <citation type="journal article" date="2001" name="DNA Res.">
        <title>Complete genomic sequence of the filamentous nitrogen-fixing cyanobacterium Anabaena sp. strain PCC 7120.</title>
        <authorList>
            <person name="Kaneko T."/>
            <person name="Nakamura Y."/>
            <person name="Wolk C.P."/>
            <person name="Kuritz T."/>
            <person name="Sasamoto S."/>
            <person name="Watanabe A."/>
            <person name="Iriguchi M."/>
            <person name="Ishikawa A."/>
            <person name="Kawashima K."/>
            <person name="Kimura T."/>
            <person name="Kishida Y."/>
            <person name="Kohara M."/>
            <person name="Matsumoto M."/>
            <person name="Matsuno A."/>
            <person name="Muraki A."/>
            <person name="Nakazaki N."/>
            <person name="Shimpo S."/>
            <person name="Sugimoto M."/>
            <person name="Takazawa M."/>
            <person name="Yamada M."/>
            <person name="Yasuda M."/>
            <person name="Tabata S."/>
        </authorList>
    </citation>
    <scope>NUCLEOTIDE SEQUENCE [LARGE SCALE GENOMIC DNA]</scope>
    <source>
        <strain>PCC 7120 / SAG 25.82 / UTEX 2576</strain>
    </source>
</reference>
<keyword id="KW-0472">Membrane</keyword>
<keyword id="KW-1185">Reference proteome</keyword>
<keyword id="KW-0812">Transmembrane</keyword>
<keyword id="KW-1133">Transmembrane helix</keyword>
<accession>Q8YZH6</accession>
<name>YC92L_NOSS1</name>
<organism>
    <name type="scientific">Nostoc sp. (strain PCC 7120 / SAG 25.82 / UTEX 2576)</name>
    <dbReference type="NCBI Taxonomy" id="103690"/>
    <lineage>
        <taxon>Bacteria</taxon>
        <taxon>Bacillati</taxon>
        <taxon>Cyanobacteriota</taxon>
        <taxon>Cyanophyceae</taxon>
        <taxon>Nostocales</taxon>
        <taxon>Nostocaceae</taxon>
        <taxon>Nostoc</taxon>
    </lineage>
</organism>
<sequence>MDLLRSLPLGLYLEQPQTWLHKLDPRVKFIWLMSFLTSYSFANNLWRILLVALLILFTLIARIPRRVWQQQMGWLLTLSFFVLAIAAISPDGLGVDYQSRLPTNPQVLTQSANTNNSATATEQLKSSKSYTYVLFHKGPVKVTRRSLDLAVRISTIIFTVIYSTNLYLLTTAPEEITAGVESLMQPLRRFKIPVTEITLTLTLSLRFIPLVLEEVQNLVRSVMTRAINWKKLGLKGAVKVWMIVAERLLENLLLRASQMASAMMVRGFTSPNEHRVPWHDLRLKLRDWLAIASLTIFWGIRVVFGNQI</sequence>
<comment type="subcellular location">
    <subcellularLocation>
        <location evidence="2">Membrane</location>
        <topology evidence="2">Multi-pass membrane protein</topology>
    </subcellularLocation>
</comment>
<comment type="similarity">
    <text evidence="2">Belongs to the ycf92 family.</text>
</comment>
<dbReference type="EMBL" id="BA000019">
    <property type="protein sequence ID" value="BAB72442.1"/>
    <property type="molecule type" value="Genomic_DNA"/>
</dbReference>
<dbReference type="PIR" id="AC1867">
    <property type="entry name" value="AC1867"/>
</dbReference>
<dbReference type="RefSeq" id="WP_010994660.1">
    <property type="nucleotide sequence ID" value="NZ_RSCN01000024.1"/>
</dbReference>
<dbReference type="SMR" id="Q8YZH6"/>
<dbReference type="STRING" id="103690.gene:10492493"/>
<dbReference type="KEGG" id="ana:alr0484"/>
<dbReference type="eggNOG" id="COG0619">
    <property type="taxonomic scope" value="Bacteria"/>
</dbReference>
<dbReference type="OrthoDB" id="506777at2"/>
<dbReference type="Proteomes" id="UP000002483">
    <property type="component" value="Chromosome"/>
</dbReference>
<dbReference type="GO" id="GO:0005886">
    <property type="term" value="C:plasma membrane"/>
    <property type="evidence" value="ECO:0007669"/>
    <property type="project" value="UniProtKB-ARBA"/>
</dbReference>
<dbReference type="CDD" id="cd16914">
    <property type="entry name" value="EcfT"/>
    <property type="match status" value="1"/>
</dbReference>
<dbReference type="InterPro" id="IPR003339">
    <property type="entry name" value="ABC/ECF_trnsptr_transmembrane"/>
</dbReference>
<dbReference type="PANTHER" id="PTHR33514">
    <property type="entry name" value="PROTEIN ABCI12, CHLOROPLASTIC"/>
    <property type="match status" value="1"/>
</dbReference>
<dbReference type="PANTHER" id="PTHR33514:SF13">
    <property type="entry name" value="PROTEIN ABCI12, CHLOROPLASTIC"/>
    <property type="match status" value="1"/>
</dbReference>
<dbReference type="Pfam" id="PF02361">
    <property type="entry name" value="CbiQ"/>
    <property type="match status" value="1"/>
</dbReference>
<gene>
    <name type="ordered locus">alr0484</name>
</gene>
<proteinExistence type="inferred from homology"/>
<protein>
    <recommendedName>
        <fullName>Ycf92-like protein</fullName>
    </recommendedName>
</protein>
<evidence type="ECO:0000255" key="1"/>
<evidence type="ECO:0000305" key="2"/>